<keyword id="KW-0456">Lyase</keyword>
<keyword id="KW-0808">Transferase</keyword>
<proteinExistence type="inferred from homology"/>
<protein>
    <recommendedName>
        <fullName>Glutathione S-transferase 1-1</fullName>
        <ecNumber>2.5.1.18</ecNumber>
        <ecNumber>4.5.1.1</ecNumber>
    </recommendedName>
    <alternativeName>
        <fullName>DDT-dehydrochlorinase</fullName>
    </alternativeName>
    <alternativeName>
        <fullName>GST class-theta</fullName>
    </alternativeName>
</protein>
<dbReference type="EC" id="2.5.1.18"/>
<dbReference type="EC" id="4.5.1.1"/>
<dbReference type="EMBL" id="M84579">
    <property type="status" value="NOT_ANNOTATED_CDS"/>
    <property type="molecule type" value="Genomic_DNA"/>
</dbReference>
<dbReference type="SMR" id="P30107"/>
<dbReference type="EnsemblMetazoa" id="XM_043795364.1">
    <property type="protein sequence ID" value="XP_043651299.1"/>
    <property type="gene ID" value="LOC122618793"/>
</dbReference>
<dbReference type="GO" id="GO:0018833">
    <property type="term" value="F:DDT-dehydrochlorinase activity"/>
    <property type="evidence" value="ECO:0007669"/>
    <property type="project" value="UniProtKB-EC"/>
</dbReference>
<dbReference type="GO" id="GO:0004364">
    <property type="term" value="F:glutathione transferase activity"/>
    <property type="evidence" value="ECO:0007669"/>
    <property type="project" value="UniProtKB-EC"/>
</dbReference>
<dbReference type="GO" id="GO:0006749">
    <property type="term" value="P:glutathione metabolic process"/>
    <property type="evidence" value="ECO:0007669"/>
    <property type="project" value="TreeGrafter"/>
</dbReference>
<dbReference type="CDD" id="cd03177">
    <property type="entry name" value="GST_C_Delta_Epsilon"/>
    <property type="match status" value="1"/>
</dbReference>
<dbReference type="CDD" id="cd03045">
    <property type="entry name" value="GST_N_Delta_Epsilon"/>
    <property type="match status" value="1"/>
</dbReference>
<dbReference type="FunFam" id="3.40.30.10:FF:000034">
    <property type="entry name" value="glutathione S-transferase 1"/>
    <property type="match status" value="1"/>
</dbReference>
<dbReference type="FunFam" id="1.20.1050.10:FF:000007">
    <property type="entry name" value="Glutathione S-transferase 1-1"/>
    <property type="match status" value="1"/>
</dbReference>
<dbReference type="Gene3D" id="1.20.1050.10">
    <property type="match status" value="1"/>
</dbReference>
<dbReference type="Gene3D" id="3.40.30.10">
    <property type="entry name" value="Glutaredoxin"/>
    <property type="match status" value="1"/>
</dbReference>
<dbReference type="InterPro" id="IPR010987">
    <property type="entry name" value="Glutathione-S-Trfase_C-like"/>
</dbReference>
<dbReference type="InterPro" id="IPR036282">
    <property type="entry name" value="Glutathione-S-Trfase_C_sf"/>
</dbReference>
<dbReference type="InterPro" id="IPR040079">
    <property type="entry name" value="Glutathione_S-Trfase"/>
</dbReference>
<dbReference type="InterPro" id="IPR004045">
    <property type="entry name" value="Glutathione_S-Trfase_N"/>
</dbReference>
<dbReference type="InterPro" id="IPR004046">
    <property type="entry name" value="GST_C"/>
</dbReference>
<dbReference type="InterPro" id="IPR036249">
    <property type="entry name" value="Thioredoxin-like_sf"/>
</dbReference>
<dbReference type="PANTHER" id="PTHR43969">
    <property type="entry name" value="GLUTATHIONE S TRANSFERASE D10, ISOFORM A-RELATED"/>
    <property type="match status" value="1"/>
</dbReference>
<dbReference type="PANTHER" id="PTHR43969:SF9">
    <property type="entry name" value="GLUTATHIONE S TRANSFERASE D10, ISOFORM A-RELATED"/>
    <property type="match status" value="1"/>
</dbReference>
<dbReference type="Pfam" id="PF00043">
    <property type="entry name" value="GST_C"/>
    <property type="match status" value="1"/>
</dbReference>
<dbReference type="Pfam" id="PF02798">
    <property type="entry name" value="GST_N"/>
    <property type="match status" value="1"/>
</dbReference>
<dbReference type="SFLD" id="SFLDS00019">
    <property type="entry name" value="Glutathione_Transferase_(cytos"/>
    <property type="match status" value="1"/>
</dbReference>
<dbReference type="SFLD" id="SFLDG01153">
    <property type="entry name" value="Main.4:_Theta-like"/>
    <property type="match status" value="1"/>
</dbReference>
<dbReference type="SUPFAM" id="SSF47616">
    <property type="entry name" value="GST C-terminal domain-like"/>
    <property type="match status" value="1"/>
</dbReference>
<dbReference type="SUPFAM" id="SSF52833">
    <property type="entry name" value="Thioredoxin-like"/>
    <property type="match status" value="1"/>
</dbReference>
<dbReference type="PROSITE" id="PS50405">
    <property type="entry name" value="GST_CTER"/>
    <property type="match status" value="1"/>
</dbReference>
<dbReference type="PROSITE" id="PS50404">
    <property type="entry name" value="GST_NTER"/>
    <property type="match status" value="1"/>
</dbReference>
<sequence>GSSPCRSVIMTAKAVGVELNKKLLNLQAGEHLKPEFVKINPQHTIPTLVDNGFALWESRAIQVYLVEKYGKTDSLYPKCPKKRAVINQRLYFDMGTLYQSFANYYYPQVFAKAPADPEAFKKIEAAFEFLNTFLEGQEYAAGDSLTVADIALVASVSTFEVAGFEISKYANVNKWYENAKKVTPGWEENWAGCLEFKKYF</sequence>
<name>GSTT1_DROTE</name>
<comment type="function">
    <text evidence="1">Conjugation of reduced glutathione to a wide number of exogenous and endogenous hydrophobic electrophiles. Has DDT dehydrochlorinase activity (By similarity).</text>
</comment>
<comment type="catalytic activity">
    <reaction>
        <text>RX + glutathione = an S-substituted glutathione + a halide anion + H(+)</text>
        <dbReference type="Rhea" id="RHEA:16437"/>
        <dbReference type="ChEBI" id="CHEBI:15378"/>
        <dbReference type="ChEBI" id="CHEBI:16042"/>
        <dbReference type="ChEBI" id="CHEBI:17792"/>
        <dbReference type="ChEBI" id="CHEBI:57925"/>
        <dbReference type="ChEBI" id="CHEBI:90779"/>
        <dbReference type="EC" id="2.5.1.18"/>
    </reaction>
</comment>
<comment type="catalytic activity">
    <reaction>
        <text>1,1,1-trichloro-2,2-bis(4-chlorophenyl)ethane = 1,1-dichloro-2,2-bis(4-chlorophenyl)ethylene + chloride + H(+)</text>
        <dbReference type="Rhea" id="RHEA:19217"/>
        <dbReference type="ChEBI" id="CHEBI:15378"/>
        <dbReference type="ChEBI" id="CHEBI:16130"/>
        <dbReference type="ChEBI" id="CHEBI:16598"/>
        <dbReference type="ChEBI" id="CHEBI:17996"/>
        <dbReference type="EC" id="4.5.1.1"/>
    </reaction>
</comment>
<comment type="subunit">
    <text>Homodimer.</text>
</comment>
<comment type="similarity">
    <text evidence="2">Belongs to the GST superfamily. Theta family.</text>
</comment>
<organism>
    <name type="scientific">Drosophila teissieri</name>
    <name type="common">Fruit fly</name>
    <dbReference type="NCBI Taxonomy" id="7243"/>
    <lineage>
        <taxon>Eukaryota</taxon>
        <taxon>Metazoa</taxon>
        <taxon>Ecdysozoa</taxon>
        <taxon>Arthropoda</taxon>
        <taxon>Hexapoda</taxon>
        <taxon>Insecta</taxon>
        <taxon>Pterygota</taxon>
        <taxon>Neoptera</taxon>
        <taxon>Endopterygota</taxon>
        <taxon>Diptera</taxon>
        <taxon>Brachycera</taxon>
        <taxon>Muscomorpha</taxon>
        <taxon>Ephydroidea</taxon>
        <taxon>Drosophilidae</taxon>
        <taxon>Drosophila</taxon>
        <taxon>Sophophora</taxon>
    </lineage>
</organism>
<gene>
    <name type="primary">GstD1</name>
    <name type="synonym">GST</name>
    <name type="synonym">Gst1</name>
</gene>
<reference key="1">
    <citation type="submission" date="1992-02" db="EMBL/GenBank/DDBJ databases">
        <title>Sequence divergence of glutathione S-transferase coding regions among seven species in the melanogaster subgroup of Drosophila.</title>
        <authorList>
            <person name="Hargis M.T."/>
            <person name="Cochrane B.J."/>
        </authorList>
    </citation>
    <scope>NUCLEOTIDE SEQUENCE [GENOMIC DNA]</scope>
</reference>
<evidence type="ECO:0000250" key="1"/>
<evidence type="ECO:0000305" key="2"/>
<accession>P30107</accession>
<feature type="chain" id="PRO_0000185952" description="Glutathione S-transferase 1-1">
    <location>
        <begin position="1" status="less than"/>
        <end position="200"/>
    </location>
</feature>
<feature type="domain" description="GST N-terminal">
    <location>
        <begin position="1" status="less than"/>
        <end position="73"/>
    </location>
</feature>
<feature type="domain" description="GST C-terminal">
    <location>
        <begin position="79"/>
        <end position="200"/>
    </location>
</feature>
<feature type="binding site" evidence="1">
    <location>
        <position position="2"/>
    </location>
    <ligand>
        <name>glutathione</name>
        <dbReference type="ChEBI" id="CHEBI:57925"/>
    </ligand>
</feature>
<feature type="binding site" evidence="1">
    <location>
        <begin position="43"/>
        <end position="45"/>
    </location>
    <ligand>
        <name>glutathione</name>
        <dbReference type="ChEBI" id="CHEBI:57925"/>
    </ligand>
</feature>
<feature type="binding site" evidence="1">
    <location>
        <begin position="57"/>
        <end position="59"/>
    </location>
    <ligand>
        <name>glutathione</name>
        <dbReference type="ChEBI" id="CHEBI:57925"/>
    </ligand>
</feature>
<feature type="non-terminal residue">
    <location>
        <position position="1"/>
    </location>
</feature>